<comment type="function">
    <text evidence="1">Catalyzes the hydrolysis of UDP-3-O-myristoyl-N-acetylglucosamine to form UDP-3-O-myristoylglucosamine and acetate, the committed step in lipid A biosynthesis.</text>
</comment>
<comment type="catalytic activity">
    <reaction evidence="1">
        <text>a UDP-3-O-[(3R)-3-hydroxyacyl]-N-acetyl-alpha-D-glucosamine + H2O = a UDP-3-O-[(3R)-3-hydroxyacyl]-alpha-D-glucosamine + acetate</text>
        <dbReference type="Rhea" id="RHEA:67816"/>
        <dbReference type="ChEBI" id="CHEBI:15377"/>
        <dbReference type="ChEBI" id="CHEBI:30089"/>
        <dbReference type="ChEBI" id="CHEBI:137740"/>
        <dbReference type="ChEBI" id="CHEBI:173225"/>
        <dbReference type="EC" id="3.5.1.108"/>
    </reaction>
</comment>
<comment type="cofactor">
    <cofactor evidence="1">
        <name>Zn(2+)</name>
        <dbReference type="ChEBI" id="CHEBI:29105"/>
    </cofactor>
</comment>
<comment type="pathway">
    <text evidence="1">Glycolipid biosynthesis; lipid IV(A) biosynthesis; lipid IV(A) from (3R)-3-hydroxytetradecanoyl-[acyl-carrier-protein] and UDP-N-acetyl-alpha-D-glucosamine: step 2/6.</text>
</comment>
<comment type="similarity">
    <text evidence="1">Belongs to the LpxC family.</text>
</comment>
<accession>Q87WZ1</accession>
<protein>
    <recommendedName>
        <fullName evidence="1">UDP-3-O-acyl-N-acetylglucosamine deacetylase</fullName>
        <shortName evidence="1">UDP-3-O-acyl-GlcNAc deacetylase</shortName>
        <ecNumber evidence="1">3.5.1.108</ecNumber>
    </recommendedName>
    <alternativeName>
        <fullName evidence="1">UDP-3-O-[R-3-hydroxymyristoyl]-N-acetylglucosamine deacetylase</fullName>
    </alternativeName>
</protein>
<proteinExistence type="inferred from homology"/>
<name>LPXC_PSESM</name>
<dbReference type="EC" id="3.5.1.108" evidence="1"/>
<dbReference type="EMBL" id="AE016853">
    <property type="protein sequence ID" value="AAO57851.1"/>
    <property type="molecule type" value="Genomic_DNA"/>
</dbReference>
<dbReference type="RefSeq" id="NP_794156.1">
    <property type="nucleotide sequence ID" value="NC_004578.1"/>
</dbReference>
<dbReference type="RefSeq" id="WP_003377651.1">
    <property type="nucleotide sequence ID" value="NC_004578.1"/>
</dbReference>
<dbReference type="SMR" id="Q87WZ1"/>
<dbReference type="STRING" id="223283.PSPTO_4402"/>
<dbReference type="GeneID" id="64467456"/>
<dbReference type="KEGG" id="pst:PSPTO_4402"/>
<dbReference type="PATRIC" id="fig|223283.9.peg.4517"/>
<dbReference type="eggNOG" id="COG0774">
    <property type="taxonomic scope" value="Bacteria"/>
</dbReference>
<dbReference type="HOGENOM" id="CLU_046528_1_0_6"/>
<dbReference type="OrthoDB" id="9802746at2"/>
<dbReference type="PhylomeDB" id="Q87WZ1"/>
<dbReference type="UniPathway" id="UPA00359">
    <property type="reaction ID" value="UER00478"/>
</dbReference>
<dbReference type="Proteomes" id="UP000002515">
    <property type="component" value="Chromosome"/>
</dbReference>
<dbReference type="GO" id="GO:0016020">
    <property type="term" value="C:membrane"/>
    <property type="evidence" value="ECO:0007669"/>
    <property type="project" value="GOC"/>
</dbReference>
<dbReference type="GO" id="GO:0046872">
    <property type="term" value="F:metal ion binding"/>
    <property type="evidence" value="ECO:0007669"/>
    <property type="project" value="UniProtKB-KW"/>
</dbReference>
<dbReference type="GO" id="GO:0103117">
    <property type="term" value="F:UDP-3-O-acyl-N-acetylglucosamine deacetylase activity"/>
    <property type="evidence" value="ECO:0007669"/>
    <property type="project" value="UniProtKB-UniRule"/>
</dbReference>
<dbReference type="GO" id="GO:0009245">
    <property type="term" value="P:lipid A biosynthetic process"/>
    <property type="evidence" value="ECO:0007669"/>
    <property type="project" value="UniProtKB-UniRule"/>
</dbReference>
<dbReference type="FunFam" id="3.30.230.20:FF:000001">
    <property type="entry name" value="UDP-3-O-acyl-N-acetylglucosamine deacetylase"/>
    <property type="match status" value="1"/>
</dbReference>
<dbReference type="Gene3D" id="3.30.230.20">
    <property type="entry name" value="lpxc deacetylase, domain 1"/>
    <property type="match status" value="1"/>
</dbReference>
<dbReference type="Gene3D" id="3.30.1700.10">
    <property type="entry name" value="lpxc deacetylase, domain 2"/>
    <property type="match status" value="1"/>
</dbReference>
<dbReference type="HAMAP" id="MF_00388">
    <property type="entry name" value="LpxC"/>
    <property type="match status" value="1"/>
</dbReference>
<dbReference type="InterPro" id="IPR020568">
    <property type="entry name" value="Ribosomal_Su5_D2-typ_SF"/>
</dbReference>
<dbReference type="InterPro" id="IPR004463">
    <property type="entry name" value="UDP-acyl_GlcNac_deAcase"/>
</dbReference>
<dbReference type="InterPro" id="IPR011334">
    <property type="entry name" value="UDP-acyl_GlcNac_deAcase_C"/>
</dbReference>
<dbReference type="InterPro" id="IPR015870">
    <property type="entry name" value="UDP-acyl_N-AcGlcN_deAcase_N"/>
</dbReference>
<dbReference type="NCBIfam" id="TIGR00325">
    <property type="entry name" value="lpxC"/>
    <property type="match status" value="1"/>
</dbReference>
<dbReference type="PANTHER" id="PTHR33694">
    <property type="entry name" value="UDP-3-O-ACYL-N-ACETYLGLUCOSAMINE DEACETYLASE 1, MITOCHONDRIAL-RELATED"/>
    <property type="match status" value="1"/>
</dbReference>
<dbReference type="PANTHER" id="PTHR33694:SF1">
    <property type="entry name" value="UDP-3-O-ACYL-N-ACETYLGLUCOSAMINE DEACETYLASE 1, MITOCHONDRIAL-RELATED"/>
    <property type="match status" value="1"/>
</dbReference>
<dbReference type="Pfam" id="PF03331">
    <property type="entry name" value="LpxC"/>
    <property type="match status" value="1"/>
</dbReference>
<dbReference type="SUPFAM" id="SSF54211">
    <property type="entry name" value="Ribosomal protein S5 domain 2-like"/>
    <property type="match status" value="2"/>
</dbReference>
<sequence length="303" mass="33227">MIKQRTLKNIIRATGVGLHSGEKVYLTLKPAPVNTGIVFCRADLDPVVQIPARAENVGDTTLSTTLVNGDVKVDTVEHLLSAMAGLGIDNAYVELSASEVPIMDGSAGPFVFLIQSAGLEEQDAPKKFIRILREVTVEEGGKRATFVPFEGFKVSFEIDFDHPVFRDRTQSASVDFSSTSFVKEVSRARTFGFMSDIEYLRKHNLALGGSVENAIVVDKDGVLNEDGLRYEDEFVKHKILDAIGDLYLLGNSLIGEFRGFKSGHALNNRLLRALIEQTDAWEVVTFEDASTAPISYMRPVAAV</sequence>
<organism>
    <name type="scientific">Pseudomonas syringae pv. tomato (strain ATCC BAA-871 / DC3000)</name>
    <dbReference type="NCBI Taxonomy" id="223283"/>
    <lineage>
        <taxon>Bacteria</taxon>
        <taxon>Pseudomonadati</taxon>
        <taxon>Pseudomonadota</taxon>
        <taxon>Gammaproteobacteria</taxon>
        <taxon>Pseudomonadales</taxon>
        <taxon>Pseudomonadaceae</taxon>
        <taxon>Pseudomonas</taxon>
    </lineage>
</organism>
<evidence type="ECO:0000255" key="1">
    <source>
        <dbReference type="HAMAP-Rule" id="MF_00388"/>
    </source>
</evidence>
<feature type="chain" id="PRO_0000191947" description="UDP-3-O-acyl-N-acetylglucosamine deacetylase">
    <location>
        <begin position="1"/>
        <end position="303"/>
    </location>
</feature>
<feature type="active site" description="Proton donor" evidence="1">
    <location>
        <position position="264"/>
    </location>
</feature>
<feature type="binding site" evidence="1">
    <location>
        <position position="78"/>
    </location>
    <ligand>
        <name>Zn(2+)</name>
        <dbReference type="ChEBI" id="CHEBI:29105"/>
    </ligand>
</feature>
<feature type="binding site" evidence="1">
    <location>
        <position position="237"/>
    </location>
    <ligand>
        <name>Zn(2+)</name>
        <dbReference type="ChEBI" id="CHEBI:29105"/>
    </ligand>
</feature>
<feature type="binding site" evidence="1">
    <location>
        <position position="241"/>
    </location>
    <ligand>
        <name>Zn(2+)</name>
        <dbReference type="ChEBI" id="CHEBI:29105"/>
    </ligand>
</feature>
<keyword id="KW-0378">Hydrolase</keyword>
<keyword id="KW-0441">Lipid A biosynthesis</keyword>
<keyword id="KW-0444">Lipid biosynthesis</keyword>
<keyword id="KW-0443">Lipid metabolism</keyword>
<keyword id="KW-0479">Metal-binding</keyword>
<keyword id="KW-1185">Reference proteome</keyword>
<keyword id="KW-0862">Zinc</keyword>
<gene>
    <name evidence="1" type="primary">lpxC</name>
    <name type="ordered locus">PSPTO_4402</name>
</gene>
<reference key="1">
    <citation type="journal article" date="2003" name="Proc. Natl. Acad. Sci. U.S.A.">
        <title>The complete genome sequence of the Arabidopsis and tomato pathogen Pseudomonas syringae pv. tomato DC3000.</title>
        <authorList>
            <person name="Buell C.R."/>
            <person name="Joardar V."/>
            <person name="Lindeberg M."/>
            <person name="Selengut J."/>
            <person name="Paulsen I.T."/>
            <person name="Gwinn M.L."/>
            <person name="Dodson R.J."/>
            <person name="DeBoy R.T."/>
            <person name="Durkin A.S."/>
            <person name="Kolonay J.F."/>
            <person name="Madupu R."/>
            <person name="Daugherty S.C."/>
            <person name="Brinkac L.M."/>
            <person name="Beanan M.J."/>
            <person name="Haft D.H."/>
            <person name="Nelson W.C."/>
            <person name="Davidsen T.M."/>
            <person name="Zafar N."/>
            <person name="Zhou L."/>
            <person name="Liu J."/>
            <person name="Yuan Q."/>
            <person name="Khouri H.M."/>
            <person name="Fedorova N.B."/>
            <person name="Tran B."/>
            <person name="Russell D."/>
            <person name="Berry K.J."/>
            <person name="Utterback T.R."/>
            <person name="Van Aken S.E."/>
            <person name="Feldblyum T.V."/>
            <person name="D'Ascenzo M."/>
            <person name="Deng W.-L."/>
            <person name="Ramos A.R."/>
            <person name="Alfano J.R."/>
            <person name="Cartinhour S."/>
            <person name="Chatterjee A.K."/>
            <person name="Delaney T.P."/>
            <person name="Lazarowitz S.G."/>
            <person name="Martin G.B."/>
            <person name="Schneider D.J."/>
            <person name="Tang X."/>
            <person name="Bender C.L."/>
            <person name="White O."/>
            <person name="Fraser C.M."/>
            <person name="Collmer A."/>
        </authorList>
    </citation>
    <scope>NUCLEOTIDE SEQUENCE [LARGE SCALE GENOMIC DNA]</scope>
    <source>
        <strain>ATCC BAA-871 / DC3000</strain>
    </source>
</reference>